<gene>
    <name evidence="10" type="primary">nr6a1b</name>
    <name evidence="2" type="synonym">gcnf</name>
    <name type="ORF">si:ch211-167p9.1</name>
    <name type="ORF">zgc:114189</name>
</gene>
<feature type="chain" id="PRO_0000292605" description="Nuclear receptor subfamily 6 group A member 1-B">
    <location>
        <begin position="1"/>
        <end position="455"/>
    </location>
</feature>
<feature type="domain" description="NR LBD" evidence="5">
    <location>
        <begin position="215"/>
        <end position="446"/>
    </location>
</feature>
<feature type="DNA-binding region" description="Nuclear receptor" evidence="4">
    <location>
        <begin position="38"/>
        <end position="113"/>
    </location>
</feature>
<feature type="zinc finger region" description="NR C4-type" evidence="4">
    <location>
        <begin position="41"/>
        <end position="61"/>
    </location>
</feature>
<feature type="zinc finger region" description="NR C4-type" evidence="4">
    <location>
        <begin position="77"/>
        <end position="96"/>
    </location>
</feature>
<feature type="region of interest" description="Disordered" evidence="6">
    <location>
        <begin position="145"/>
        <end position="173"/>
    </location>
</feature>
<feature type="compositionally biased region" description="Polar residues" evidence="6">
    <location>
        <begin position="149"/>
        <end position="165"/>
    </location>
</feature>
<sequence>MEVENRPNTYDFSKRDKLLSNRFYEENSLQDETDDGGERWCLICGDRASGLHYGIISCEGCKGFFKRSICNKRIYRCNRDKNCQMSRKQRNRCQYCRLQKCLQMGMNRKAIREDGMPGGRNKMIGPVHISLEEIERLMSGQEFKEGSDLSDSWSHGYSNHSSPGNSLSEGGQSLSFSSSRSVSCRDECISPQLTHTFLMCKYPLPPPTGSILKTQTHTLTGQILADEDLTPLTTPMLIEDGYSVTQSELLALLCGIADELLFRQIVWLKRLPFFTDLSIKDCTRLLGSSWHQLILLSSITVHSAQILGELANVTHHYTPSSHTLQRFGEDAMEVMESLNFLFRKFHQLNISNEEYSCLKTITLLNQETTGLCNTSMLKQLSERYWTLCRELTERLHPQRPKRFSDIITCLTEIRHTSGKMMSIPLEQLPLLFKAVLYSCTTNQNPWLPKSSTSRT</sequence>
<protein>
    <recommendedName>
        <fullName>Nuclear receptor subfamily 6 group A member 1-B</fullName>
    </recommendedName>
    <alternativeName>
        <fullName>Germ cell nuclear factor B</fullName>
        <shortName>GCNF-B</shortName>
    </alternativeName>
</protein>
<proteinExistence type="evidence at transcript level"/>
<comment type="function">
    <text evidence="1">Probable orphan nuclear receptor. Binds to a response element containing repeats of the motif 5'-AGGTCA-3' (By similarity).</text>
</comment>
<comment type="subunit">
    <text evidence="2">Homodimer.</text>
</comment>
<comment type="subcellular location">
    <subcellularLocation>
        <location evidence="7">Nucleus</location>
    </subcellularLocation>
</comment>
<comment type="similarity">
    <text evidence="3">Belongs to the nuclear hormone receptor family. NR6 subfamily.</text>
</comment>
<comment type="sequence caution" evidence="7">
    <conflict type="erroneous gene model prediction">
        <sequence resource="EMBL-CDS" id="CAE30390"/>
    </conflict>
</comment>
<keyword id="KW-0238">DNA-binding</keyword>
<keyword id="KW-0479">Metal-binding</keyword>
<keyword id="KW-0539">Nucleus</keyword>
<keyword id="KW-0675">Receptor</keyword>
<keyword id="KW-1185">Reference proteome</keyword>
<keyword id="KW-0804">Transcription</keyword>
<keyword id="KW-0805">Transcription regulation</keyword>
<keyword id="KW-0862">Zinc</keyword>
<keyword id="KW-0863">Zinc-finger</keyword>
<evidence type="ECO:0000250" key="1"/>
<evidence type="ECO:0000250" key="2">
    <source>
        <dbReference type="UniProtKB" id="P70033"/>
    </source>
</evidence>
<evidence type="ECO:0000255" key="3"/>
<evidence type="ECO:0000255" key="4">
    <source>
        <dbReference type="PROSITE-ProRule" id="PRU00407"/>
    </source>
</evidence>
<evidence type="ECO:0000255" key="5">
    <source>
        <dbReference type="PROSITE-ProRule" id="PRU01189"/>
    </source>
</evidence>
<evidence type="ECO:0000256" key="6">
    <source>
        <dbReference type="SAM" id="MobiDB-lite"/>
    </source>
</evidence>
<evidence type="ECO:0000305" key="7"/>
<evidence type="ECO:0000312" key="8">
    <source>
        <dbReference type="EMBL" id="AAH97237.1"/>
    </source>
</evidence>
<evidence type="ECO:0000312" key="9">
    <source>
        <dbReference type="EMBL" id="CAE30390.1"/>
    </source>
</evidence>
<evidence type="ECO:0000312" key="10">
    <source>
        <dbReference type="ZFIN" id="ZDB-GENE-040724-202"/>
    </source>
</evidence>
<organism>
    <name type="scientific">Danio rerio</name>
    <name type="common">Zebrafish</name>
    <name type="synonym">Brachydanio rerio</name>
    <dbReference type="NCBI Taxonomy" id="7955"/>
    <lineage>
        <taxon>Eukaryota</taxon>
        <taxon>Metazoa</taxon>
        <taxon>Chordata</taxon>
        <taxon>Craniata</taxon>
        <taxon>Vertebrata</taxon>
        <taxon>Euteleostomi</taxon>
        <taxon>Actinopterygii</taxon>
        <taxon>Neopterygii</taxon>
        <taxon>Teleostei</taxon>
        <taxon>Ostariophysi</taxon>
        <taxon>Cypriniformes</taxon>
        <taxon>Danionidae</taxon>
        <taxon>Danioninae</taxon>
        <taxon>Danio</taxon>
    </lineage>
</organism>
<dbReference type="EMBL" id="AL772368">
    <property type="protein sequence ID" value="CAE30390.1"/>
    <property type="status" value="ALT_SEQ"/>
    <property type="molecule type" value="Genomic_DNA"/>
</dbReference>
<dbReference type="EMBL" id="BC097237">
    <property type="protein sequence ID" value="AAH97237.1"/>
    <property type="molecule type" value="mRNA"/>
</dbReference>
<dbReference type="EMBL" id="DQ017610">
    <property type="protein sequence ID" value="AAY85265.1"/>
    <property type="molecule type" value="mRNA"/>
</dbReference>
<dbReference type="RefSeq" id="NP_001028892.1">
    <property type="nucleotide sequence ID" value="NM_001033720.1"/>
</dbReference>
<dbReference type="SMR" id="Q4V8R7"/>
<dbReference type="STRING" id="7955.ENSDARP00000019758"/>
<dbReference type="PaxDb" id="7955-ENSDARP00000109637"/>
<dbReference type="GeneID" id="497167"/>
<dbReference type="KEGG" id="dre:497167"/>
<dbReference type="AGR" id="ZFIN:ZDB-GENE-040724-202"/>
<dbReference type="CTD" id="497167"/>
<dbReference type="ZFIN" id="ZDB-GENE-040724-202">
    <property type="gene designation" value="nr6a1b"/>
</dbReference>
<dbReference type="eggNOG" id="KOG3575">
    <property type="taxonomic scope" value="Eukaryota"/>
</dbReference>
<dbReference type="InParanoid" id="Q4V8R7"/>
<dbReference type="OrthoDB" id="10006908at2759"/>
<dbReference type="PhylomeDB" id="Q4V8R7"/>
<dbReference type="PRO" id="PR:Q4V8R7"/>
<dbReference type="Proteomes" id="UP000000437">
    <property type="component" value="Chromosome 21"/>
</dbReference>
<dbReference type="GO" id="GO:0000785">
    <property type="term" value="C:chromatin"/>
    <property type="evidence" value="ECO:0000318"/>
    <property type="project" value="GO_Central"/>
</dbReference>
<dbReference type="GO" id="GO:0005737">
    <property type="term" value="C:cytoplasm"/>
    <property type="evidence" value="ECO:0000250"/>
    <property type="project" value="UniProtKB"/>
</dbReference>
<dbReference type="GO" id="GO:0005634">
    <property type="term" value="C:nucleus"/>
    <property type="evidence" value="ECO:0000250"/>
    <property type="project" value="UniProtKB"/>
</dbReference>
<dbReference type="GO" id="GO:0034056">
    <property type="term" value="F:estrogen response element binding"/>
    <property type="evidence" value="ECO:0000318"/>
    <property type="project" value="GO_Central"/>
</dbReference>
<dbReference type="GO" id="GO:0042562">
    <property type="term" value="F:hormone binding"/>
    <property type="evidence" value="ECO:0007669"/>
    <property type="project" value="UniProtKB-ARBA"/>
</dbReference>
<dbReference type="GO" id="GO:0004879">
    <property type="term" value="F:nuclear receptor activity"/>
    <property type="evidence" value="ECO:0000318"/>
    <property type="project" value="GO_Central"/>
</dbReference>
<dbReference type="GO" id="GO:0042803">
    <property type="term" value="F:protein homodimerization activity"/>
    <property type="evidence" value="ECO:0000250"/>
    <property type="project" value="UniProtKB"/>
</dbReference>
<dbReference type="GO" id="GO:0043565">
    <property type="term" value="F:sequence-specific DNA binding"/>
    <property type="evidence" value="ECO:0000250"/>
    <property type="project" value="UniProtKB"/>
</dbReference>
<dbReference type="GO" id="GO:0008270">
    <property type="term" value="F:zinc ion binding"/>
    <property type="evidence" value="ECO:0007669"/>
    <property type="project" value="UniProtKB-KW"/>
</dbReference>
<dbReference type="GO" id="GO:0048513">
    <property type="term" value="P:animal organ development"/>
    <property type="evidence" value="ECO:0000250"/>
    <property type="project" value="UniProtKB"/>
</dbReference>
<dbReference type="GO" id="GO:0009952">
    <property type="term" value="P:anterior/posterior pattern specification"/>
    <property type="evidence" value="ECO:0000250"/>
    <property type="project" value="UniProtKB"/>
</dbReference>
<dbReference type="GO" id="GO:0016477">
    <property type="term" value="P:cell migration"/>
    <property type="evidence" value="ECO:0000250"/>
    <property type="project" value="UniProtKB"/>
</dbReference>
<dbReference type="GO" id="GO:0030917">
    <property type="term" value="P:midbrain-hindbrain boundary development"/>
    <property type="evidence" value="ECO:0000250"/>
    <property type="project" value="UniProtKB"/>
</dbReference>
<dbReference type="GO" id="GO:0022008">
    <property type="term" value="P:neurogenesis"/>
    <property type="evidence" value="ECO:0000250"/>
    <property type="project" value="UniProtKB"/>
</dbReference>
<dbReference type="GO" id="GO:0006357">
    <property type="term" value="P:regulation of transcription by RNA polymerase II"/>
    <property type="evidence" value="ECO:0000318"/>
    <property type="project" value="GO_Central"/>
</dbReference>
<dbReference type="GO" id="GO:0033993">
    <property type="term" value="P:response to lipid"/>
    <property type="evidence" value="ECO:0007669"/>
    <property type="project" value="UniProtKB-ARBA"/>
</dbReference>
<dbReference type="CDD" id="cd07169">
    <property type="entry name" value="NR_DBD_GCNF_like"/>
    <property type="match status" value="1"/>
</dbReference>
<dbReference type="CDD" id="cd06953">
    <property type="entry name" value="NR_LBD_DHR4_like"/>
    <property type="match status" value="1"/>
</dbReference>
<dbReference type="FunFam" id="3.30.50.10:FF:000006">
    <property type="entry name" value="Nuclear receptor subfamily 5 group A member"/>
    <property type="match status" value="1"/>
</dbReference>
<dbReference type="FunFam" id="1.10.565.10:FF:000015">
    <property type="entry name" value="Nuclear receptor subfamily 6 group A member 1"/>
    <property type="match status" value="1"/>
</dbReference>
<dbReference type="Gene3D" id="3.30.50.10">
    <property type="entry name" value="Erythroid Transcription Factor GATA-1, subunit A"/>
    <property type="match status" value="1"/>
</dbReference>
<dbReference type="Gene3D" id="1.10.565.10">
    <property type="entry name" value="Retinoid X Receptor"/>
    <property type="match status" value="1"/>
</dbReference>
<dbReference type="InterPro" id="IPR035500">
    <property type="entry name" value="NHR-like_dom_sf"/>
</dbReference>
<dbReference type="InterPro" id="IPR000536">
    <property type="entry name" value="Nucl_hrmn_rcpt_lig-bd"/>
</dbReference>
<dbReference type="InterPro" id="IPR050200">
    <property type="entry name" value="Nuclear_hormone_rcpt_NR3"/>
</dbReference>
<dbReference type="InterPro" id="IPR001723">
    <property type="entry name" value="Nuclear_hrmn_rcpt"/>
</dbReference>
<dbReference type="InterPro" id="IPR001628">
    <property type="entry name" value="Znf_hrmn_rcpt"/>
</dbReference>
<dbReference type="InterPro" id="IPR013088">
    <property type="entry name" value="Znf_NHR/GATA"/>
</dbReference>
<dbReference type="PANTHER" id="PTHR48092">
    <property type="entry name" value="KNIRPS-RELATED PROTEIN-RELATED"/>
    <property type="match status" value="1"/>
</dbReference>
<dbReference type="Pfam" id="PF00104">
    <property type="entry name" value="Hormone_recep"/>
    <property type="match status" value="1"/>
</dbReference>
<dbReference type="Pfam" id="PF00105">
    <property type="entry name" value="zf-C4"/>
    <property type="match status" value="1"/>
</dbReference>
<dbReference type="PRINTS" id="PR00398">
    <property type="entry name" value="STRDHORMONER"/>
</dbReference>
<dbReference type="PRINTS" id="PR00047">
    <property type="entry name" value="STROIDFINGER"/>
</dbReference>
<dbReference type="SMART" id="SM00430">
    <property type="entry name" value="HOLI"/>
    <property type="match status" value="1"/>
</dbReference>
<dbReference type="SMART" id="SM00399">
    <property type="entry name" value="ZnF_C4"/>
    <property type="match status" value="1"/>
</dbReference>
<dbReference type="SUPFAM" id="SSF57716">
    <property type="entry name" value="Glucocorticoid receptor-like (DNA-binding domain)"/>
    <property type="match status" value="1"/>
</dbReference>
<dbReference type="SUPFAM" id="SSF48508">
    <property type="entry name" value="Nuclear receptor ligand-binding domain"/>
    <property type="match status" value="1"/>
</dbReference>
<dbReference type="PROSITE" id="PS51843">
    <property type="entry name" value="NR_LBD"/>
    <property type="match status" value="1"/>
</dbReference>
<dbReference type="PROSITE" id="PS00031">
    <property type="entry name" value="NUCLEAR_REC_DBD_1"/>
    <property type="match status" value="1"/>
</dbReference>
<dbReference type="PROSITE" id="PS51030">
    <property type="entry name" value="NUCLEAR_REC_DBD_2"/>
    <property type="match status" value="1"/>
</dbReference>
<accession>Q4V8R7</accession>
<accession>Q7T003</accession>
<name>GCNFB_DANRE</name>
<reference key="1">
    <citation type="journal article" date="2013" name="Nature">
        <title>The zebrafish reference genome sequence and its relationship to the human genome.</title>
        <authorList>
            <person name="Howe K."/>
            <person name="Clark M.D."/>
            <person name="Torroja C.F."/>
            <person name="Torrance J."/>
            <person name="Berthelot C."/>
            <person name="Muffato M."/>
            <person name="Collins J.E."/>
            <person name="Humphray S."/>
            <person name="McLaren K."/>
            <person name="Matthews L."/>
            <person name="McLaren S."/>
            <person name="Sealy I."/>
            <person name="Caccamo M."/>
            <person name="Churcher C."/>
            <person name="Scott C."/>
            <person name="Barrett J.C."/>
            <person name="Koch R."/>
            <person name="Rauch G.J."/>
            <person name="White S."/>
            <person name="Chow W."/>
            <person name="Kilian B."/>
            <person name="Quintais L.T."/>
            <person name="Guerra-Assuncao J.A."/>
            <person name="Zhou Y."/>
            <person name="Gu Y."/>
            <person name="Yen J."/>
            <person name="Vogel J.H."/>
            <person name="Eyre T."/>
            <person name="Redmond S."/>
            <person name="Banerjee R."/>
            <person name="Chi J."/>
            <person name="Fu B."/>
            <person name="Langley E."/>
            <person name="Maguire S.F."/>
            <person name="Laird G.K."/>
            <person name="Lloyd D."/>
            <person name="Kenyon E."/>
            <person name="Donaldson S."/>
            <person name="Sehra H."/>
            <person name="Almeida-King J."/>
            <person name="Loveland J."/>
            <person name="Trevanion S."/>
            <person name="Jones M."/>
            <person name="Quail M."/>
            <person name="Willey D."/>
            <person name="Hunt A."/>
            <person name="Burton J."/>
            <person name="Sims S."/>
            <person name="McLay K."/>
            <person name="Plumb B."/>
            <person name="Davis J."/>
            <person name="Clee C."/>
            <person name="Oliver K."/>
            <person name="Clark R."/>
            <person name="Riddle C."/>
            <person name="Elliot D."/>
            <person name="Threadgold G."/>
            <person name="Harden G."/>
            <person name="Ware D."/>
            <person name="Begum S."/>
            <person name="Mortimore B."/>
            <person name="Kerry G."/>
            <person name="Heath P."/>
            <person name="Phillimore B."/>
            <person name="Tracey A."/>
            <person name="Corby N."/>
            <person name="Dunn M."/>
            <person name="Johnson C."/>
            <person name="Wood J."/>
            <person name="Clark S."/>
            <person name="Pelan S."/>
            <person name="Griffiths G."/>
            <person name="Smith M."/>
            <person name="Glithero R."/>
            <person name="Howden P."/>
            <person name="Barker N."/>
            <person name="Lloyd C."/>
            <person name="Stevens C."/>
            <person name="Harley J."/>
            <person name="Holt K."/>
            <person name="Panagiotidis G."/>
            <person name="Lovell J."/>
            <person name="Beasley H."/>
            <person name="Henderson C."/>
            <person name="Gordon D."/>
            <person name="Auger K."/>
            <person name="Wright D."/>
            <person name="Collins J."/>
            <person name="Raisen C."/>
            <person name="Dyer L."/>
            <person name="Leung K."/>
            <person name="Robertson L."/>
            <person name="Ambridge K."/>
            <person name="Leongamornlert D."/>
            <person name="McGuire S."/>
            <person name="Gilderthorp R."/>
            <person name="Griffiths C."/>
            <person name="Manthravadi D."/>
            <person name="Nichol S."/>
            <person name="Barker G."/>
            <person name="Whitehead S."/>
            <person name="Kay M."/>
            <person name="Brown J."/>
            <person name="Murnane C."/>
            <person name="Gray E."/>
            <person name="Humphries M."/>
            <person name="Sycamore N."/>
            <person name="Barker D."/>
            <person name="Saunders D."/>
            <person name="Wallis J."/>
            <person name="Babbage A."/>
            <person name="Hammond S."/>
            <person name="Mashreghi-Mohammadi M."/>
            <person name="Barr L."/>
            <person name="Martin S."/>
            <person name="Wray P."/>
            <person name="Ellington A."/>
            <person name="Matthews N."/>
            <person name="Ellwood M."/>
            <person name="Woodmansey R."/>
            <person name="Clark G."/>
            <person name="Cooper J."/>
            <person name="Tromans A."/>
            <person name="Grafham D."/>
            <person name="Skuce C."/>
            <person name="Pandian R."/>
            <person name="Andrews R."/>
            <person name="Harrison E."/>
            <person name="Kimberley A."/>
            <person name="Garnett J."/>
            <person name="Fosker N."/>
            <person name="Hall R."/>
            <person name="Garner P."/>
            <person name="Kelly D."/>
            <person name="Bird C."/>
            <person name="Palmer S."/>
            <person name="Gehring I."/>
            <person name="Berger A."/>
            <person name="Dooley C.M."/>
            <person name="Ersan-Urun Z."/>
            <person name="Eser C."/>
            <person name="Geiger H."/>
            <person name="Geisler M."/>
            <person name="Karotki L."/>
            <person name="Kirn A."/>
            <person name="Konantz J."/>
            <person name="Konantz M."/>
            <person name="Oberlander M."/>
            <person name="Rudolph-Geiger S."/>
            <person name="Teucke M."/>
            <person name="Lanz C."/>
            <person name="Raddatz G."/>
            <person name="Osoegawa K."/>
            <person name="Zhu B."/>
            <person name="Rapp A."/>
            <person name="Widaa S."/>
            <person name="Langford C."/>
            <person name="Yang F."/>
            <person name="Schuster S.C."/>
            <person name="Carter N.P."/>
            <person name="Harrow J."/>
            <person name="Ning Z."/>
            <person name="Herrero J."/>
            <person name="Searle S.M."/>
            <person name="Enright A."/>
            <person name="Geisler R."/>
            <person name="Plasterk R.H."/>
            <person name="Lee C."/>
            <person name="Westerfield M."/>
            <person name="de Jong P.J."/>
            <person name="Zon L.I."/>
            <person name="Postlethwait J.H."/>
            <person name="Nusslein-Volhard C."/>
            <person name="Hubbard T.J."/>
            <person name="Roest Crollius H."/>
            <person name="Rogers J."/>
            <person name="Stemple D.L."/>
        </authorList>
    </citation>
    <scope>NUCLEOTIDE SEQUENCE [LARGE SCALE GENOMIC DNA]</scope>
    <source>
        <strain>Tuebingen</strain>
    </source>
</reference>
<reference evidence="7 9" key="2">
    <citation type="submission" date="2005-06" db="EMBL/GenBank/DDBJ databases">
        <authorList>
            <consortium name="NIH - Zebrafish Gene Collection (ZGC) project"/>
        </authorList>
    </citation>
    <scope>NUCLEOTIDE SEQUENCE [LARGE SCALE MRNA]</scope>
    <source>
        <tissue evidence="8">Embryo</tissue>
    </source>
</reference>
<reference evidence="7 9" key="3">
    <citation type="submission" date="2005-04" db="EMBL/GenBank/DDBJ databases">
        <title>Nuclear receptors expression during zebrafish development reveals an unsuspected link with nervous system and retina development.</title>
        <authorList>
            <person name="Bertrand S."/>
            <person name="Sachs L."/>
            <person name="Bardet P.-L."/>
            <person name="Bonnelye E."/>
            <person name="Dufraisse M."/>
            <person name="Escriva H."/>
            <person name="Haramis A.-P."/>
            <person name="Marchand O."/>
            <person name="Safi R."/>
            <person name="Vanacker J.-M."/>
            <person name="Zelus D."/>
            <person name="Thisse C."/>
            <person name="Thisse B."/>
            <person name="Laudet V."/>
        </authorList>
    </citation>
    <scope>NUCLEOTIDE SEQUENCE [MRNA] OF 35-453</scope>
</reference>